<comment type="function">
    <text evidence="1">Mnh complex is a Na(+)/H(+) antiporter involved in Na(+) excretion.</text>
</comment>
<comment type="subunit">
    <text evidence="1">May form a heterooligomeric complex that consists of seven subunits: mnhA1, mnhB1, mnhC1, mnhD1, mnhE1, mnhF1 and mnhG1.</text>
</comment>
<comment type="subcellular location">
    <subcellularLocation>
        <location evidence="3">Cell membrane</location>
        <topology evidence="3">Multi-pass membrane protein</topology>
    </subcellularLocation>
</comment>
<comment type="similarity">
    <text evidence="3">Belongs to the CPA3 antiporters (TC 2.A.63) subunit D family.</text>
</comment>
<evidence type="ECO:0000250" key="1"/>
<evidence type="ECO:0000255" key="2"/>
<evidence type="ECO:0000305" key="3"/>
<sequence length="498" mass="55155">MIESNLLVLTLVIPILTAILLIFIGKRPIIKRHVALVGTLLTLVIALINLKNVLRDGPIKVELGSWKAPYSIVFVVDIFSALLIITSIIITILVILYSYRSIGLDRERHYYYFSIMFMLIGIIGSFTTGDIFNLFVFFEVFLMSSYCLLVIGTTKIQLQETIKYILVNVVSSSFFVMGVAVLYSVVGTLNLAHISERLSQLSVHDSGLVNIVFILFIFVFATKAGVFPMYVWLPGAYYAPPVAIITFFGALLTKVGVYAIARTLSLFFNNTVSFSHYVILFLALLTIIFGCIGAIAYYDTKKIILYNIMIAVGVILVGIAMMNESGMTGAIYYTLHDMLVKASLFLLIGVMYKITKTTDLRHFGGLIKGYPILGWTFFIAALSLAGIPPFSGFYGKFYIVRATFEKGFYLSGIIVLLSSLIVLYSVIRIFLKGFFGEVEGYTLSKKVNVKYLTTIAVASTVITVIFGLSADTLFPIIKDGAETFVDPSQYIHSVLGGK</sequence>
<reference key="1">
    <citation type="journal article" date="2005" name="J. Bacteriol.">
        <title>Insights on evolution of virulence and resistance from the complete genome analysis of an early methicillin-resistant Staphylococcus aureus strain and a biofilm-producing methicillin-resistant Staphylococcus epidermidis strain.</title>
        <authorList>
            <person name="Gill S.R."/>
            <person name="Fouts D.E."/>
            <person name="Archer G.L."/>
            <person name="Mongodin E.F."/>
            <person name="DeBoy R.T."/>
            <person name="Ravel J."/>
            <person name="Paulsen I.T."/>
            <person name="Kolonay J.F."/>
            <person name="Brinkac L.M."/>
            <person name="Beanan M.J."/>
            <person name="Dodson R.J."/>
            <person name="Daugherty S.C."/>
            <person name="Madupu R."/>
            <person name="Angiuoli S.V."/>
            <person name="Durkin A.S."/>
            <person name="Haft D.H."/>
            <person name="Vamathevan J.J."/>
            <person name="Khouri H."/>
            <person name="Utterback T.R."/>
            <person name="Lee C."/>
            <person name="Dimitrov G."/>
            <person name="Jiang L."/>
            <person name="Qin H."/>
            <person name="Weidman J."/>
            <person name="Tran K."/>
            <person name="Kang K.H."/>
            <person name="Hance I.R."/>
            <person name="Nelson K.E."/>
            <person name="Fraser C.M."/>
        </authorList>
    </citation>
    <scope>NUCLEOTIDE SEQUENCE [LARGE SCALE GENOMIC DNA]</scope>
    <source>
        <strain>ATCC 35984 / DSM 28319 / BCRC 17069 / CCUG 31568 / BM 3577 / RP62A</strain>
    </source>
</reference>
<gene>
    <name type="primary">mnhD1</name>
    <name type="ordered locus">SERP0535</name>
</gene>
<accession>Q5HQL3</accession>
<organism>
    <name type="scientific">Staphylococcus epidermidis (strain ATCC 35984 / DSM 28319 / BCRC 17069 / CCUG 31568 / BM 3577 / RP62A)</name>
    <dbReference type="NCBI Taxonomy" id="176279"/>
    <lineage>
        <taxon>Bacteria</taxon>
        <taxon>Bacillati</taxon>
        <taxon>Bacillota</taxon>
        <taxon>Bacilli</taxon>
        <taxon>Bacillales</taxon>
        <taxon>Staphylococcaceae</taxon>
        <taxon>Staphylococcus</taxon>
    </lineage>
</organism>
<dbReference type="EMBL" id="CP000029">
    <property type="protein sequence ID" value="AAW53938.1"/>
    <property type="molecule type" value="Genomic_DNA"/>
</dbReference>
<dbReference type="RefSeq" id="WP_010959153.1">
    <property type="nucleotide sequence ID" value="NC_002976.3"/>
</dbReference>
<dbReference type="SMR" id="Q5HQL3"/>
<dbReference type="STRING" id="176279.SERP0535"/>
<dbReference type="KEGG" id="ser:SERP0535"/>
<dbReference type="eggNOG" id="COG0651">
    <property type="taxonomic scope" value="Bacteria"/>
</dbReference>
<dbReference type="HOGENOM" id="CLU_007100_9_2_9"/>
<dbReference type="Proteomes" id="UP000000531">
    <property type="component" value="Chromosome"/>
</dbReference>
<dbReference type="GO" id="GO:0005886">
    <property type="term" value="C:plasma membrane"/>
    <property type="evidence" value="ECO:0007669"/>
    <property type="project" value="UniProtKB-SubCell"/>
</dbReference>
<dbReference type="GO" id="GO:0015297">
    <property type="term" value="F:antiporter activity"/>
    <property type="evidence" value="ECO:0007669"/>
    <property type="project" value="UniProtKB-KW"/>
</dbReference>
<dbReference type="GO" id="GO:0008137">
    <property type="term" value="F:NADH dehydrogenase (ubiquinone) activity"/>
    <property type="evidence" value="ECO:0007669"/>
    <property type="project" value="InterPro"/>
</dbReference>
<dbReference type="GO" id="GO:0042773">
    <property type="term" value="P:ATP synthesis coupled electron transport"/>
    <property type="evidence" value="ECO:0007669"/>
    <property type="project" value="InterPro"/>
</dbReference>
<dbReference type="GO" id="GO:0006814">
    <property type="term" value="P:sodium ion transport"/>
    <property type="evidence" value="ECO:0007669"/>
    <property type="project" value="UniProtKB-KW"/>
</dbReference>
<dbReference type="InterPro" id="IPR050586">
    <property type="entry name" value="CPA3_Na-H_Antiporter_D"/>
</dbReference>
<dbReference type="InterPro" id="IPR003918">
    <property type="entry name" value="NADH_UbQ_OxRdtase"/>
</dbReference>
<dbReference type="InterPro" id="IPR001750">
    <property type="entry name" value="ND/Mrp_TM"/>
</dbReference>
<dbReference type="NCBIfam" id="NF005818">
    <property type="entry name" value="PRK07691.1"/>
    <property type="match status" value="1"/>
</dbReference>
<dbReference type="PANTHER" id="PTHR42703:SF1">
    <property type="entry name" value="NA(+)_H(+) ANTIPORTER SUBUNIT D1"/>
    <property type="match status" value="1"/>
</dbReference>
<dbReference type="PANTHER" id="PTHR42703">
    <property type="entry name" value="NADH DEHYDROGENASE"/>
    <property type="match status" value="1"/>
</dbReference>
<dbReference type="Pfam" id="PF00361">
    <property type="entry name" value="Proton_antipo_M"/>
    <property type="match status" value="1"/>
</dbReference>
<dbReference type="PRINTS" id="PR01437">
    <property type="entry name" value="NUOXDRDTASE4"/>
</dbReference>
<protein>
    <recommendedName>
        <fullName>Na(+)/H(+) antiporter subunit D1</fullName>
    </recommendedName>
    <alternativeName>
        <fullName>Mnh complex subunit D1</fullName>
    </alternativeName>
</protein>
<name>MNHD1_STAEQ</name>
<proteinExistence type="inferred from homology"/>
<keyword id="KW-0050">Antiport</keyword>
<keyword id="KW-1003">Cell membrane</keyword>
<keyword id="KW-0375">Hydrogen ion transport</keyword>
<keyword id="KW-0406">Ion transport</keyword>
<keyword id="KW-0472">Membrane</keyword>
<keyword id="KW-1185">Reference proteome</keyword>
<keyword id="KW-0915">Sodium</keyword>
<keyword id="KW-0739">Sodium transport</keyword>
<keyword id="KW-0812">Transmembrane</keyword>
<keyword id="KW-1133">Transmembrane helix</keyword>
<keyword id="KW-0813">Transport</keyword>
<feature type="chain" id="PRO_0000372138" description="Na(+)/H(+) antiporter subunit D1">
    <location>
        <begin position="1"/>
        <end position="498"/>
    </location>
</feature>
<feature type="transmembrane region" description="Helical" evidence="2">
    <location>
        <begin position="5"/>
        <end position="25"/>
    </location>
</feature>
<feature type="transmembrane region" description="Helical" evidence="2">
    <location>
        <begin position="34"/>
        <end position="54"/>
    </location>
</feature>
<feature type="transmembrane region" description="Helical" evidence="2">
    <location>
        <begin position="72"/>
        <end position="92"/>
    </location>
</feature>
<feature type="transmembrane region" description="Helical" evidence="2">
    <location>
        <begin position="109"/>
        <end position="129"/>
    </location>
</feature>
<feature type="transmembrane region" description="Helical" evidence="2">
    <location>
        <begin position="131"/>
        <end position="151"/>
    </location>
</feature>
<feature type="transmembrane region" description="Helical" evidence="2">
    <location>
        <begin position="174"/>
        <end position="194"/>
    </location>
</feature>
<feature type="transmembrane region" description="Helical" evidence="2">
    <location>
        <begin position="211"/>
        <end position="231"/>
    </location>
</feature>
<feature type="transmembrane region" description="Helical" evidence="2">
    <location>
        <begin position="232"/>
        <end position="252"/>
    </location>
</feature>
<feature type="transmembrane region" description="Helical" evidence="2">
    <location>
        <begin position="277"/>
        <end position="297"/>
    </location>
</feature>
<feature type="transmembrane region" description="Helical" evidence="2">
    <location>
        <begin position="303"/>
        <end position="323"/>
    </location>
</feature>
<feature type="transmembrane region" description="Helical" evidence="2">
    <location>
        <begin position="331"/>
        <end position="351"/>
    </location>
</feature>
<feature type="transmembrane region" description="Helical" evidence="2">
    <location>
        <begin position="370"/>
        <end position="390"/>
    </location>
</feature>
<feature type="transmembrane region" description="Helical" evidence="2">
    <location>
        <begin position="407"/>
        <end position="427"/>
    </location>
</feature>
<feature type="transmembrane region" description="Helical" evidence="2">
    <location>
        <begin position="457"/>
        <end position="477"/>
    </location>
</feature>